<evidence type="ECO:0000255" key="1">
    <source>
        <dbReference type="HAMAP-Rule" id="MF_01077"/>
    </source>
</evidence>
<proteinExistence type="inferred from homology"/>
<keyword id="KW-0963">Cytoplasm</keyword>
<keyword id="KW-1185">Reference proteome</keyword>
<keyword id="KW-0690">Ribosome biogenesis</keyword>
<sequence>MEINREEIEKKVKEIVEPVIRGMGFKLFDVEFKPEGRGWVLRIIADKEGGITIKDCEEISRKVSALLDVEDIIPFSYLLEITSPGLTRPLTKVEHYDFFKGRLVKLILKEPIEGKREVVGYIEDVKNGIIDIREKEKGKVLHIPFSAIAKGRLEIEGW</sequence>
<gene>
    <name evidence="1" type="primary">rimP</name>
    <name type="ordered locus">aq_260</name>
</gene>
<organism>
    <name type="scientific">Aquifex aeolicus (strain VF5)</name>
    <dbReference type="NCBI Taxonomy" id="224324"/>
    <lineage>
        <taxon>Bacteria</taxon>
        <taxon>Pseudomonadati</taxon>
        <taxon>Aquificota</taxon>
        <taxon>Aquificia</taxon>
        <taxon>Aquificales</taxon>
        <taxon>Aquificaceae</taxon>
        <taxon>Aquifex</taxon>
    </lineage>
</organism>
<dbReference type="EMBL" id="AE000657">
    <property type="protein sequence ID" value="AAC06588.1"/>
    <property type="molecule type" value="Genomic_DNA"/>
</dbReference>
<dbReference type="PIR" id="G70323">
    <property type="entry name" value="G70323"/>
</dbReference>
<dbReference type="RefSeq" id="NP_213179.1">
    <property type="nucleotide sequence ID" value="NC_000918.1"/>
</dbReference>
<dbReference type="RefSeq" id="WP_010880117.1">
    <property type="nucleotide sequence ID" value="NC_000918.1"/>
</dbReference>
<dbReference type="SMR" id="O66619"/>
<dbReference type="FunCoup" id="O66619">
    <property type="interactions" value="268"/>
</dbReference>
<dbReference type="STRING" id="224324.aq_260"/>
<dbReference type="EnsemblBacteria" id="AAC06588">
    <property type="protein sequence ID" value="AAC06588"/>
    <property type="gene ID" value="aq_260"/>
</dbReference>
<dbReference type="KEGG" id="aae:aq_260"/>
<dbReference type="PATRIC" id="fig|224324.8.peg.214"/>
<dbReference type="eggNOG" id="COG0779">
    <property type="taxonomic scope" value="Bacteria"/>
</dbReference>
<dbReference type="HOGENOM" id="CLU_070525_2_2_0"/>
<dbReference type="InParanoid" id="O66619"/>
<dbReference type="OrthoDB" id="9805006at2"/>
<dbReference type="Proteomes" id="UP000000798">
    <property type="component" value="Chromosome"/>
</dbReference>
<dbReference type="GO" id="GO:0005829">
    <property type="term" value="C:cytosol"/>
    <property type="evidence" value="ECO:0000318"/>
    <property type="project" value="GO_Central"/>
</dbReference>
<dbReference type="GO" id="GO:0000028">
    <property type="term" value="P:ribosomal small subunit assembly"/>
    <property type="evidence" value="ECO:0000318"/>
    <property type="project" value="GO_Central"/>
</dbReference>
<dbReference type="GO" id="GO:0006412">
    <property type="term" value="P:translation"/>
    <property type="evidence" value="ECO:0000318"/>
    <property type="project" value="GO_Central"/>
</dbReference>
<dbReference type="CDD" id="cd01734">
    <property type="entry name" value="YlxS_C"/>
    <property type="match status" value="1"/>
</dbReference>
<dbReference type="FunFam" id="3.30.300.70:FF:000001">
    <property type="entry name" value="Ribosome maturation factor RimP"/>
    <property type="match status" value="1"/>
</dbReference>
<dbReference type="Gene3D" id="2.30.30.180">
    <property type="entry name" value="Ribosome maturation factor RimP, C-terminal domain"/>
    <property type="match status" value="1"/>
</dbReference>
<dbReference type="Gene3D" id="3.30.300.70">
    <property type="entry name" value="RimP-like superfamily, N-terminal"/>
    <property type="match status" value="1"/>
</dbReference>
<dbReference type="HAMAP" id="MF_01077">
    <property type="entry name" value="RimP"/>
    <property type="match status" value="1"/>
</dbReference>
<dbReference type="InterPro" id="IPR003728">
    <property type="entry name" value="Ribosome_maturation_RimP"/>
</dbReference>
<dbReference type="InterPro" id="IPR028998">
    <property type="entry name" value="RimP_C"/>
</dbReference>
<dbReference type="InterPro" id="IPR036847">
    <property type="entry name" value="RimP_C_sf"/>
</dbReference>
<dbReference type="InterPro" id="IPR028989">
    <property type="entry name" value="RimP_N"/>
</dbReference>
<dbReference type="InterPro" id="IPR035956">
    <property type="entry name" value="RimP_N_sf"/>
</dbReference>
<dbReference type="PANTHER" id="PTHR33867">
    <property type="entry name" value="RIBOSOME MATURATION FACTOR RIMP"/>
    <property type="match status" value="1"/>
</dbReference>
<dbReference type="PANTHER" id="PTHR33867:SF1">
    <property type="entry name" value="RIBOSOME MATURATION FACTOR RIMP"/>
    <property type="match status" value="1"/>
</dbReference>
<dbReference type="Pfam" id="PF17384">
    <property type="entry name" value="DUF150_C"/>
    <property type="match status" value="1"/>
</dbReference>
<dbReference type="Pfam" id="PF02576">
    <property type="entry name" value="RimP_N"/>
    <property type="match status" value="1"/>
</dbReference>
<dbReference type="SUPFAM" id="SSF74942">
    <property type="entry name" value="YhbC-like, C-terminal domain"/>
    <property type="match status" value="1"/>
</dbReference>
<dbReference type="SUPFAM" id="SSF75420">
    <property type="entry name" value="YhbC-like, N-terminal domain"/>
    <property type="match status" value="1"/>
</dbReference>
<protein>
    <recommendedName>
        <fullName evidence="1">Ribosome maturation factor RimP</fullName>
    </recommendedName>
</protein>
<comment type="function">
    <text evidence="1">Required for maturation of 30S ribosomal subunits.</text>
</comment>
<comment type="subcellular location">
    <subcellularLocation>
        <location evidence="1">Cytoplasm</location>
    </subcellularLocation>
</comment>
<comment type="similarity">
    <text evidence="1">Belongs to the RimP family.</text>
</comment>
<reference key="1">
    <citation type="journal article" date="1998" name="Nature">
        <title>The complete genome of the hyperthermophilic bacterium Aquifex aeolicus.</title>
        <authorList>
            <person name="Deckert G."/>
            <person name="Warren P.V."/>
            <person name="Gaasterland T."/>
            <person name="Young W.G."/>
            <person name="Lenox A.L."/>
            <person name="Graham D.E."/>
            <person name="Overbeek R."/>
            <person name="Snead M.A."/>
            <person name="Keller M."/>
            <person name="Aujay M."/>
            <person name="Huber R."/>
            <person name="Feldman R.A."/>
            <person name="Short J.M."/>
            <person name="Olsen G.J."/>
            <person name="Swanson R.V."/>
        </authorList>
    </citation>
    <scope>NUCLEOTIDE SEQUENCE [LARGE SCALE GENOMIC DNA]</scope>
    <source>
        <strain>VF5</strain>
    </source>
</reference>
<accession>O66619</accession>
<feature type="chain" id="PRO_0000181839" description="Ribosome maturation factor RimP">
    <location>
        <begin position="1"/>
        <end position="158"/>
    </location>
</feature>
<name>RIMP_AQUAE</name>